<accession>F4JSG3</accession>
<accession>O49671</accession>
<keyword id="KW-0227">DNA damage</keyword>
<keyword id="KW-0233">DNA recombination</keyword>
<keyword id="KW-0234">DNA repair</keyword>
<keyword id="KW-0235">DNA replication</keyword>
<keyword id="KW-0238">DNA-binding</keyword>
<keyword id="KW-0479">Metal-binding</keyword>
<keyword id="KW-0539">Nucleus</keyword>
<keyword id="KW-1185">Reference proteome</keyword>
<keyword id="KW-0862">Zinc</keyword>
<keyword id="KW-0863">Zinc-finger</keyword>
<evidence type="ECO:0000250" key="1"/>
<evidence type="ECO:0000255" key="2"/>
<evidence type="ECO:0000256" key="3">
    <source>
        <dbReference type="SAM" id="MobiDB-lite"/>
    </source>
</evidence>
<evidence type="ECO:0000305" key="4"/>
<proteinExistence type="evidence at transcript level"/>
<sequence length="784" mass="85992">MEVSLTAGAIGKIMNGEVTTEADMIPVLQVTDLKQIMAQQDPTRERFRMVLSDGTYLHQGMLGTDLNNLVKEGTLQPGSIVRLTRFVGDVIKGRRIVIVPQLEVLKQISDIIGHPVPGGKHNDQRGADSGIKFNTTEQQGSGIRQVNNIEPGRSNAAISPQVGGTGSSVPASTTPSTRAYSNPSSGNGVTRQDYARDPPTSYPHQPQPPPPMYANRGPVARNEAPPKIIPVNALSPYSGRWTIKARVTNKAALKQYSNPRGEGKVFNFDLLDADGGEIRVTCFNAVADQFYDQIVVGNLYLISRGSLRPAQKNFNHLRNDYEIMLDNASTIKQCYEEDAAIPRHQFHFRTIGDIESMENNCIVDVIGIVSSISPTVTITRKNGTATPKRSLQLKDMSGRSVEVTMWGDFCNAEGQRLQSLCDSGVFPVLAVKAGRISEFNGKTVSTIGSSQLFIDPDFVEAEKLKNWFEREGKSVPCISLSREFSGSGKVDVRKTISQIKDEKLGTSEKPDWITVSATILYLKFDNFCYTACPIMNGDRPCSKKVTDNGDGTWRCEKCDKSVDECDYRYILQLQIQDHTDLTCVTAFQEAGEEIMGISAKDLYYVKNEHKDEEKFEDIIRKVAFTKYNFKLKVKEETFSDEQRVKATVVKVDKLNYSADTRTMLGAMDKLRTRDANSLPINPEGSDYNADVVNTGIGSSGTRDPSSVQRRDFGLHAHQSGQSGNHYSGGGATTSCNVCGNSGHVSAKCPGATKPQEQGQYMGGSYRGTTGSYGGGLPRQHVGSY</sequence>
<organism>
    <name type="scientific">Arabidopsis thaliana</name>
    <name type="common">Mouse-ear cress</name>
    <dbReference type="NCBI Taxonomy" id="3702"/>
    <lineage>
        <taxon>Eukaryota</taxon>
        <taxon>Viridiplantae</taxon>
        <taxon>Streptophyta</taxon>
        <taxon>Embryophyta</taxon>
        <taxon>Tracheophyta</taxon>
        <taxon>Spermatophyta</taxon>
        <taxon>Magnoliopsida</taxon>
        <taxon>eudicotyledons</taxon>
        <taxon>Gunneridae</taxon>
        <taxon>Pentapetalae</taxon>
        <taxon>rosids</taxon>
        <taxon>malvids</taxon>
        <taxon>Brassicales</taxon>
        <taxon>Brassicaceae</taxon>
        <taxon>Camelineae</taxon>
        <taxon>Arabidopsis</taxon>
    </lineage>
</organism>
<protein>
    <recommendedName>
        <fullName>Replication protein A 70 kDa DNA-binding subunit E</fullName>
        <shortName>AtRPA70E</shortName>
    </recommendedName>
    <alternativeName>
        <fullName>AtRPA1-1</fullName>
    </alternativeName>
    <alternativeName>
        <fullName>Replication factor A protein 1E</fullName>
    </alternativeName>
    <alternativeName>
        <fullName>Replication protein A 1E</fullName>
        <shortName>AtRPA1E</shortName>
    </alternativeName>
</protein>
<name>RFA1E_ARATH</name>
<feature type="chain" id="PRO_0000422619" description="Replication protein A 70 kDa DNA-binding subunit E">
    <location>
        <begin position="1"/>
        <end position="784"/>
    </location>
</feature>
<feature type="DNA-binding region" description="OB">
    <location>
        <begin position="241"/>
        <end position="327"/>
    </location>
</feature>
<feature type="zinc finger region" description="C4-type" evidence="2">
    <location>
        <begin position="532"/>
        <end position="558"/>
    </location>
</feature>
<feature type="region of interest" description="Disordered" evidence="3">
    <location>
        <begin position="114"/>
        <end position="224"/>
    </location>
</feature>
<feature type="region of interest" description="Disordered" evidence="3">
    <location>
        <begin position="678"/>
        <end position="707"/>
    </location>
</feature>
<feature type="region of interest" description="Disordered" evidence="3">
    <location>
        <begin position="746"/>
        <end position="784"/>
    </location>
</feature>
<feature type="compositionally biased region" description="Polar residues" evidence="3">
    <location>
        <begin position="132"/>
        <end position="148"/>
    </location>
</feature>
<feature type="compositionally biased region" description="Polar residues" evidence="3">
    <location>
        <begin position="167"/>
        <end position="190"/>
    </location>
</feature>
<feature type="compositionally biased region" description="Polar residues" evidence="3">
    <location>
        <begin position="695"/>
        <end position="707"/>
    </location>
</feature>
<feature type="compositionally biased region" description="Gly residues" evidence="3">
    <location>
        <begin position="760"/>
        <end position="776"/>
    </location>
</feature>
<feature type="sequence conflict" description="In Ref. 3; AF439837." evidence="4" ref="3">
    <original>R</original>
    <variation>C</variation>
    <location>
        <position position="643"/>
    </location>
</feature>
<dbReference type="EMBL" id="AL021687">
    <property type="protein sequence ID" value="CAA16702.1"/>
    <property type="status" value="ALT_SEQ"/>
    <property type="molecule type" value="Genomic_DNA"/>
</dbReference>
<dbReference type="EMBL" id="AL161550">
    <property type="protein sequence ID" value="CAB78915.1"/>
    <property type="status" value="ALT_SEQ"/>
    <property type="molecule type" value="Genomic_DNA"/>
</dbReference>
<dbReference type="EMBL" id="CP002687">
    <property type="protein sequence ID" value="AEE84147.1"/>
    <property type="molecule type" value="Genomic_DNA"/>
</dbReference>
<dbReference type="EMBL" id="AF439837">
    <property type="status" value="NOT_ANNOTATED_CDS"/>
    <property type="molecule type" value="mRNA"/>
</dbReference>
<dbReference type="PIR" id="T04434">
    <property type="entry name" value="T04434"/>
</dbReference>
<dbReference type="RefSeq" id="NP_567576.2">
    <property type="nucleotide sequence ID" value="NM_118032.2"/>
</dbReference>
<dbReference type="SMR" id="F4JSG3"/>
<dbReference type="FunCoup" id="F4JSG3">
    <property type="interactions" value="3869"/>
</dbReference>
<dbReference type="STRING" id="3702.F4JSG3"/>
<dbReference type="GlyGen" id="F4JSG3">
    <property type="glycosylation" value="1 site"/>
</dbReference>
<dbReference type="iPTMnet" id="F4JSG3"/>
<dbReference type="PaxDb" id="3702-AT4G19130.1"/>
<dbReference type="EnsemblPlants" id="AT4G19130.1">
    <property type="protein sequence ID" value="AT4G19130.1"/>
    <property type="gene ID" value="AT4G19130"/>
</dbReference>
<dbReference type="GeneID" id="827651"/>
<dbReference type="Gramene" id="AT4G19130.1">
    <property type="protein sequence ID" value="AT4G19130.1"/>
    <property type="gene ID" value="AT4G19130"/>
</dbReference>
<dbReference type="KEGG" id="ath:AT4G19130"/>
<dbReference type="Araport" id="AT4G19130"/>
<dbReference type="TAIR" id="AT4G19130">
    <property type="gene designation" value="RPA1E"/>
</dbReference>
<dbReference type="eggNOG" id="KOG0851">
    <property type="taxonomic scope" value="Eukaryota"/>
</dbReference>
<dbReference type="HOGENOM" id="CLU_012393_3_0_1"/>
<dbReference type="InParanoid" id="F4JSG3"/>
<dbReference type="OMA" id="QGMLATD"/>
<dbReference type="PRO" id="PR:F4JSG3"/>
<dbReference type="Proteomes" id="UP000006548">
    <property type="component" value="Chromosome 4"/>
</dbReference>
<dbReference type="ExpressionAtlas" id="F4JSG3">
    <property type="expression patterns" value="baseline and differential"/>
</dbReference>
<dbReference type="GO" id="GO:0005634">
    <property type="term" value="C:nucleus"/>
    <property type="evidence" value="ECO:0007669"/>
    <property type="project" value="UniProtKB-SubCell"/>
</dbReference>
<dbReference type="GO" id="GO:0003677">
    <property type="term" value="F:DNA binding"/>
    <property type="evidence" value="ECO:0007669"/>
    <property type="project" value="UniProtKB-KW"/>
</dbReference>
<dbReference type="GO" id="GO:0008270">
    <property type="term" value="F:zinc ion binding"/>
    <property type="evidence" value="ECO:0007669"/>
    <property type="project" value="UniProtKB-KW"/>
</dbReference>
<dbReference type="GO" id="GO:0006310">
    <property type="term" value="P:DNA recombination"/>
    <property type="evidence" value="ECO:0007669"/>
    <property type="project" value="UniProtKB-KW"/>
</dbReference>
<dbReference type="GO" id="GO:0006281">
    <property type="term" value="P:DNA repair"/>
    <property type="evidence" value="ECO:0007669"/>
    <property type="project" value="UniProtKB-KW"/>
</dbReference>
<dbReference type="GO" id="GO:0006260">
    <property type="term" value="P:DNA replication"/>
    <property type="evidence" value="ECO:0007669"/>
    <property type="project" value="UniProtKB-KW"/>
</dbReference>
<dbReference type="CDD" id="cd04474">
    <property type="entry name" value="RPA1_DBD_A"/>
    <property type="match status" value="1"/>
</dbReference>
<dbReference type="CDD" id="cd04475">
    <property type="entry name" value="RPA1_DBD_B"/>
    <property type="match status" value="1"/>
</dbReference>
<dbReference type="CDD" id="cd04476">
    <property type="entry name" value="RPA1_DBD_C"/>
    <property type="match status" value="1"/>
</dbReference>
<dbReference type="CDD" id="cd04477">
    <property type="entry name" value="RPA1N"/>
    <property type="match status" value="1"/>
</dbReference>
<dbReference type="FunFam" id="2.40.50.140:FF:000041">
    <property type="entry name" value="Replication protein A subunit"/>
    <property type="match status" value="1"/>
</dbReference>
<dbReference type="FunFam" id="2.40.50.140:FF:000064">
    <property type="entry name" value="Replication protein A subunit"/>
    <property type="match status" value="1"/>
</dbReference>
<dbReference type="FunFam" id="2.40.50.140:FF:000090">
    <property type="entry name" value="Replication protein A subunit"/>
    <property type="match status" value="1"/>
</dbReference>
<dbReference type="FunFam" id="2.40.50.140:FF:000117">
    <property type="entry name" value="Replication protein A subunit"/>
    <property type="match status" value="1"/>
</dbReference>
<dbReference type="Gene3D" id="2.40.50.140">
    <property type="entry name" value="Nucleic acid-binding proteins"/>
    <property type="match status" value="4"/>
</dbReference>
<dbReference type="InterPro" id="IPR047192">
    <property type="entry name" value="Euk_RPA1_DBD_C"/>
</dbReference>
<dbReference type="InterPro" id="IPR012340">
    <property type="entry name" value="NA-bd_OB-fold"/>
</dbReference>
<dbReference type="InterPro" id="IPR004365">
    <property type="entry name" value="NA-bd_OB_tRNA"/>
</dbReference>
<dbReference type="InterPro" id="IPR013955">
    <property type="entry name" value="Rep_factor-A_C"/>
</dbReference>
<dbReference type="InterPro" id="IPR007199">
    <property type="entry name" value="Rep_factor-A_N"/>
</dbReference>
<dbReference type="InterPro" id="IPR031657">
    <property type="entry name" value="REPA_OB_2"/>
</dbReference>
<dbReference type="InterPro" id="IPR004591">
    <property type="entry name" value="Rfa1"/>
</dbReference>
<dbReference type="InterPro" id="IPR001878">
    <property type="entry name" value="Znf_CCHC"/>
</dbReference>
<dbReference type="NCBIfam" id="TIGR00617">
    <property type="entry name" value="rpa1"/>
    <property type="match status" value="1"/>
</dbReference>
<dbReference type="PANTHER" id="PTHR23273">
    <property type="entry name" value="REPLICATION FACTOR A 1, RFA1"/>
    <property type="match status" value="1"/>
</dbReference>
<dbReference type="PANTHER" id="PTHR23273:SF4">
    <property type="entry name" value="REPLICATION PROTEIN A OB DOMAIN-CONTAINING PROTEIN"/>
    <property type="match status" value="1"/>
</dbReference>
<dbReference type="Pfam" id="PF04057">
    <property type="entry name" value="Rep-A_N"/>
    <property type="match status" value="1"/>
</dbReference>
<dbReference type="Pfam" id="PF08646">
    <property type="entry name" value="Rep_fac-A_C"/>
    <property type="match status" value="1"/>
</dbReference>
<dbReference type="Pfam" id="PF16900">
    <property type="entry name" value="REPA_OB_2"/>
    <property type="match status" value="1"/>
</dbReference>
<dbReference type="Pfam" id="PF01336">
    <property type="entry name" value="tRNA_anti-codon"/>
    <property type="match status" value="1"/>
</dbReference>
<dbReference type="SUPFAM" id="SSF50249">
    <property type="entry name" value="Nucleic acid-binding proteins"/>
    <property type="match status" value="4"/>
</dbReference>
<dbReference type="PROSITE" id="PS50158">
    <property type="entry name" value="ZF_CCHC"/>
    <property type="match status" value="1"/>
</dbReference>
<reference key="1">
    <citation type="journal article" date="1999" name="Nature">
        <title>Sequence and analysis of chromosome 4 of the plant Arabidopsis thaliana.</title>
        <authorList>
            <person name="Mayer K.F.X."/>
            <person name="Schueller C."/>
            <person name="Wambutt R."/>
            <person name="Murphy G."/>
            <person name="Volckaert G."/>
            <person name="Pohl T."/>
            <person name="Duesterhoeft A."/>
            <person name="Stiekema W."/>
            <person name="Entian K.-D."/>
            <person name="Terryn N."/>
            <person name="Harris B."/>
            <person name="Ansorge W."/>
            <person name="Brandt P."/>
            <person name="Grivell L.A."/>
            <person name="Rieger M."/>
            <person name="Weichselgartner M."/>
            <person name="de Simone V."/>
            <person name="Obermaier B."/>
            <person name="Mache R."/>
            <person name="Mueller M."/>
            <person name="Kreis M."/>
            <person name="Delseny M."/>
            <person name="Puigdomenech P."/>
            <person name="Watson M."/>
            <person name="Schmidtheini T."/>
            <person name="Reichert B."/>
            <person name="Portetelle D."/>
            <person name="Perez-Alonso M."/>
            <person name="Boutry M."/>
            <person name="Bancroft I."/>
            <person name="Vos P."/>
            <person name="Hoheisel J."/>
            <person name="Zimmermann W."/>
            <person name="Wedler H."/>
            <person name="Ridley P."/>
            <person name="Langham S.-A."/>
            <person name="McCullagh B."/>
            <person name="Bilham L."/>
            <person name="Robben J."/>
            <person name="van der Schueren J."/>
            <person name="Grymonprez B."/>
            <person name="Chuang Y.-J."/>
            <person name="Vandenbussche F."/>
            <person name="Braeken M."/>
            <person name="Weltjens I."/>
            <person name="Voet M."/>
            <person name="Bastiaens I."/>
            <person name="Aert R."/>
            <person name="Defoor E."/>
            <person name="Weitzenegger T."/>
            <person name="Bothe G."/>
            <person name="Ramsperger U."/>
            <person name="Hilbert H."/>
            <person name="Braun M."/>
            <person name="Holzer E."/>
            <person name="Brandt A."/>
            <person name="Peters S."/>
            <person name="van Staveren M."/>
            <person name="Dirkse W."/>
            <person name="Mooijman P."/>
            <person name="Klein Lankhorst R."/>
            <person name="Rose M."/>
            <person name="Hauf J."/>
            <person name="Koetter P."/>
            <person name="Berneiser S."/>
            <person name="Hempel S."/>
            <person name="Feldpausch M."/>
            <person name="Lamberth S."/>
            <person name="Van den Daele H."/>
            <person name="De Keyser A."/>
            <person name="Buysshaert C."/>
            <person name="Gielen J."/>
            <person name="Villarroel R."/>
            <person name="De Clercq R."/>
            <person name="van Montagu M."/>
            <person name="Rogers J."/>
            <person name="Cronin A."/>
            <person name="Quail M.A."/>
            <person name="Bray-Allen S."/>
            <person name="Clark L."/>
            <person name="Doggett J."/>
            <person name="Hall S."/>
            <person name="Kay M."/>
            <person name="Lennard N."/>
            <person name="McLay K."/>
            <person name="Mayes R."/>
            <person name="Pettett A."/>
            <person name="Rajandream M.A."/>
            <person name="Lyne M."/>
            <person name="Benes V."/>
            <person name="Rechmann S."/>
            <person name="Borkova D."/>
            <person name="Bloecker H."/>
            <person name="Scharfe M."/>
            <person name="Grimm M."/>
            <person name="Loehnert T.-H."/>
            <person name="Dose S."/>
            <person name="de Haan M."/>
            <person name="Maarse A.C."/>
            <person name="Schaefer M."/>
            <person name="Mueller-Auer S."/>
            <person name="Gabel C."/>
            <person name="Fuchs M."/>
            <person name="Fartmann B."/>
            <person name="Granderath K."/>
            <person name="Dauner D."/>
            <person name="Herzl A."/>
            <person name="Neumann S."/>
            <person name="Argiriou A."/>
            <person name="Vitale D."/>
            <person name="Liguori R."/>
            <person name="Piravandi E."/>
            <person name="Massenet O."/>
            <person name="Quigley F."/>
            <person name="Clabauld G."/>
            <person name="Muendlein A."/>
            <person name="Felber R."/>
            <person name="Schnabl S."/>
            <person name="Hiller R."/>
            <person name="Schmidt W."/>
            <person name="Lecharny A."/>
            <person name="Aubourg S."/>
            <person name="Chefdor F."/>
            <person name="Cooke R."/>
            <person name="Berger C."/>
            <person name="Monfort A."/>
            <person name="Casacuberta E."/>
            <person name="Gibbons T."/>
            <person name="Weber N."/>
            <person name="Vandenbol M."/>
            <person name="Bargues M."/>
            <person name="Terol J."/>
            <person name="Torres A."/>
            <person name="Perez-Perez A."/>
            <person name="Purnelle B."/>
            <person name="Bent E."/>
            <person name="Johnson S."/>
            <person name="Tacon D."/>
            <person name="Jesse T."/>
            <person name="Heijnen L."/>
            <person name="Schwarz S."/>
            <person name="Scholler P."/>
            <person name="Heber S."/>
            <person name="Francs P."/>
            <person name="Bielke C."/>
            <person name="Frishman D."/>
            <person name="Haase D."/>
            <person name="Lemcke K."/>
            <person name="Mewes H.-W."/>
            <person name="Stocker S."/>
            <person name="Zaccaria P."/>
            <person name="Bevan M."/>
            <person name="Wilson R.K."/>
            <person name="de la Bastide M."/>
            <person name="Habermann K."/>
            <person name="Parnell L."/>
            <person name="Dedhia N."/>
            <person name="Gnoj L."/>
            <person name="Schutz K."/>
            <person name="Huang E."/>
            <person name="Spiegel L."/>
            <person name="Sekhon M."/>
            <person name="Murray J."/>
            <person name="Sheet P."/>
            <person name="Cordes M."/>
            <person name="Abu-Threideh J."/>
            <person name="Stoneking T."/>
            <person name="Kalicki J."/>
            <person name="Graves T."/>
            <person name="Harmon G."/>
            <person name="Edwards J."/>
            <person name="Latreille P."/>
            <person name="Courtney L."/>
            <person name="Cloud J."/>
            <person name="Abbott A."/>
            <person name="Scott K."/>
            <person name="Johnson D."/>
            <person name="Minx P."/>
            <person name="Bentley D."/>
            <person name="Fulton B."/>
            <person name="Miller N."/>
            <person name="Greco T."/>
            <person name="Kemp K."/>
            <person name="Kramer J."/>
            <person name="Fulton L."/>
            <person name="Mardis E."/>
            <person name="Dante M."/>
            <person name="Pepin K."/>
            <person name="Hillier L.W."/>
            <person name="Nelson J."/>
            <person name="Spieth J."/>
            <person name="Ryan E."/>
            <person name="Andrews S."/>
            <person name="Geisel C."/>
            <person name="Layman D."/>
            <person name="Du H."/>
            <person name="Ali J."/>
            <person name="Berghoff A."/>
            <person name="Jones K."/>
            <person name="Drone K."/>
            <person name="Cotton M."/>
            <person name="Joshu C."/>
            <person name="Antonoiu B."/>
            <person name="Zidanic M."/>
            <person name="Strong C."/>
            <person name="Sun H."/>
            <person name="Lamar B."/>
            <person name="Yordan C."/>
            <person name="Ma P."/>
            <person name="Zhong J."/>
            <person name="Preston R."/>
            <person name="Vil D."/>
            <person name="Shekher M."/>
            <person name="Matero A."/>
            <person name="Shah R."/>
            <person name="Swaby I.K."/>
            <person name="O'Shaughnessy A."/>
            <person name="Rodriguez M."/>
            <person name="Hoffman J."/>
            <person name="Till S."/>
            <person name="Granat S."/>
            <person name="Shohdy N."/>
            <person name="Hasegawa A."/>
            <person name="Hameed A."/>
            <person name="Lodhi M."/>
            <person name="Johnson A."/>
            <person name="Chen E."/>
            <person name="Marra M.A."/>
            <person name="Martienssen R."/>
            <person name="McCombie W.R."/>
        </authorList>
    </citation>
    <scope>NUCLEOTIDE SEQUENCE [LARGE SCALE GENOMIC DNA]</scope>
    <source>
        <strain>cv. Columbia</strain>
    </source>
</reference>
<reference key="2">
    <citation type="journal article" date="2017" name="Plant J.">
        <title>Araport11: a complete reannotation of the Arabidopsis thaliana reference genome.</title>
        <authorList>
            <person name="Cheng C.Y."/>
            <person name="Krishnakumar V."/>
            <person name="Chan A.P."/>
            <person name="Thibaud-Nissen F."/>
            <person name="Schobel S."/>
            <person name="Town C.D."/>
        </authorList>
    </citation>
    <scope>GENOME REANNOTATION</scope>
    <source>
        <strain>cv. Columbia</strain>
    </source>
</reference>
<reference key="3">
    <citation type="journal article" date="2003" name="Science">
        <title>Empirical analysis of transcriptional activity in the Arabidopsis genome.</title>
        <authorList>
            <person name="Yamada K."/>
            <person name="Lim J."/>
            <person name="Dale J.M."/>
            <person name="Chen H."/>
            <person name="Shinn P."/>
            <person name="Palm C.J."/>
            <person name="Southwick A.M."/>
            <person name="Wu H.C."/>
            <person name="Kim C.J."/>
            <person name="Nguyen M."/>
            <person name="Pham P.K."/>
            <person name="Cheuk R.F."/>
            <person name="Karlin-Newmann G."/>
            <person name="Liu S.X."/>
            <person name="Lam B."/>
            <person name="Sakano H."/>
            <person name="Wu T."/>
            <person name="Yu G."/>
            <person name="Miranda M."/>
            <person name="Quach H.L."/>
            <person name="Tripp M."/>
            <person name="Chang C.H."/>
            <person name="Lee J.M."/>
            <person name="Toriumi M.J."/>
            <person name="Chan M.M."/>
            <person name="Tang C.C."/>
            <person name="Onodera C.S."/>
            <person name="Deng J.M."/>
            <person name="Akiyama K."/>
            <person name="Ansari Y."/>
            <person name="Arakawa T."/>
            <person name="Banh J."/>
            <person name="Banno F."/>
            <person name="Bowser L."/>
            <person name="Brooks S.Y."/>
            <person name="Carninci P."/>
            <person name="Chao Q."/>
            <person name="Choy N."/>
            <person name="Enju A."/>
            <person name="Goldsmith A.D."/>
            <person name="Gurjal M."/>
            <person name="Hansen N.F."/>
            <person name="Hayashizaki Y."/>
            <person name="Johnson-Hopson C."/>
            <person name="Hsuan V.W."/>
            <person name="Iida K."/>
            <person name="Karnes M."/>
            <person name="Khan S."/>
            <person name="Koesema E."/>
            <person name="Ishida J."/>
            <person name="Jiang P.X."/>
            <person name="Jones T."/>
            <person name="Kawai J."/>
            <person name="Kamiya A."/>
            <person name="Meyers C."/>
            <person name="Nakajima M."/>
            <person name="Narusaka M."/>
            <person name="Seki M."/>
            <person name="Sakurai T."/>
            <person name="Satou M."/>
            <person name="Tamse R."/>
            <person name="Vaysberg M."/>
            <person name="Wallender E.K."/>
            <person name="Wong C."/>
            <person name="Yamamura Y."/>
            <person name="Yuan S."/>
            <person name="Shinozaki K."/>
            <person name="Davis R.W."/>
            <person name="Theologis A."/>
            <person name="Ecker J.R."/>
        </authorList>
    </citation>
    <scope>NUCLEOTIDE SEQUENCE [LARGE SCALE MRNA] OF 305-784</scope>
    <source>
        <strain>cv. Columbia</strain>
    </source>
</reference>
<gene>
    <name type="primary">RPA1E</name>
    <name type="synonym">RPA70E</name>
    <name type="ordered locus">At4g19130</name>
    <name type="ORF">T18B16.100</name>
</gene>
<comment type="function">
    <text evidence="1">Component of the replication protein A complex (RPA) required for DNA recombination, repair and replication. The activity of RPA is mediated by single-stranded DNA binding and protein interactions. Probably involved in repair of double-strand DNA breaks (DSBs) induced by genotoxic stresses (By similarity).</text>
</comment>
<comment type="subunit">
    <text evidence="1">Heterotrimer of RPA1, RPA2 and RPA3 (canonical replication protein A complex).</text>
</comment>
<comment type="subcellular location">
    <subcellularLocation>
        <location evidence="1">Nucleus</location>
    </subcellularLocation>
</comment>
<comment type="similarity">
    <text evidence="4">Belongs to the replication factor A protein 1 family.</text>
</comment>
<comment type="sequence caution" evidence="4">
    <conflict type="erroneous gene model prediction">
        <sequence resource="EMBL-CDS" id="CAA16702"/>
    </conflict>
</comment>
<comment type="sequence caution" evidence="4">
    <conflict type="erroneous gene model prediction">
        <sequence resource="EMBL-CDS" id="CAB78915"/>
    </conflict>
</comment>